<name>GMHA_ACTSZ</name>
<organism>
    <name type="scientific">Actinobacillus succinogenes (strain ATCC 55618 / DSM 22257 / CCUG 43843 / 130Z)</name>
    <dbReference type="NCBI Taxonomy" id="339671"/>
    <lineage>
        <taxon>Bacteria</taxon>
        <taxon>Pseudomonadati</taxon>
        <taxon>Pseudomonadota</taxon>
        <taxon>Gammaproteobacteria</taxon>
        <taxon>Pasteurellales</taxon>
        <taxon>Pasteurellaceae</taxon>
        <taxon>Actinobacillus</taxon>
    </lineage>
</organism>
<keyword id="KW-0119">Carbohydrate metabolism</keyword>
<keyword id="KW-0963">Cytoplasm</keyword>
<keyword id="KW-0413">Isomerase</keyword>
<keyword id="KW-0479">Metal-binding</keyword>
<keyword id="KW-1185">Reference proteome</keyword>
<keyword id="KW-0862">Zinc</keyword>
<gene>
    <name evidence="1" type="primary">gmhA</name>
    <name type="ordered locus">Asuc_0532</name>
</gene>
<accession>A6VLR0</accession>
<feature type="chain" id="PRO_1000071169" description="Phosphoheptose isomerase">
    <location>
        <begin position="1"/>
        <end position="194"/>
    </location>
</feature>
<feature type="domain" description="SIS" evidence="1">
    <location>
        <begin position="37"/>
        <end position="194"/>
    </location>
</feature>
<feature type="binding site" evidence="1">
    <location>
        <begin position="52"/>
        <end position="54"/>
    </location>
    <ligand>
        <name>substrate</name>
    </ligand>
</feature>
<feature type="binding site" evidence="1">
    <location>
        <position position="61"/>
    </location>
    <ligand>
        <name>Zn(2+)</name>
        <dbReference type="ChEBI" id="CHEBI:29105"/>
    </ligand>
</feature>
<feature type="binding site" evidence="1">
    <location>
        <position position="65"/>
    </location>
    <ligand>
        <name>substrate</name>
    </ligand>
</feature>
<feature type="binding site" evidence="1">
    <location>
        <position position="65"/>
    </location>
    <ligand>
        <name>Zn(2+)</name>
        <dbReference type="ChEBI" id="CHEBI:29105"/>
    </ligand>
</feature>
<feature type="binding site" evidence="1">
    <location>
        <begin position="93"/>
        <end position="94"/>
    </location>
    <ligand>
        <name>substrate</name>
    </ligand>
</feature>
<feature type="binding site" evidence="1">
    <location>
        <begin position="119"/>
        <end position="121"/>
    </location>
    <ligand>
        <name>substrate</name>
    </ligand>
</feature>
<feature type="binding site" evidence="1">
    <location>
        <position position="124"/>
    </location>
    <ligand>
        <name>substrate</name>
    </ligand>
</feature>
<feature type="binding site" evidence="1">
    <location>
        <position position="172"/>
    </location>
    <ligand>
        <name>substrate</name>
    </ligand>
</feature>
<feature type="binding site" evidence="1">
    <location>
        <position position="172"/>
    </location>
    <ligand>
        <name>Zn(2+)</name>
        <dbReference type="ChEBI" id="CHEBI:29105"/>
    </ligand>
</feature>
<feature type="binding site" evidence="1">
    <location>
        <position position="180"/>
    </location>
    <ligand>
        <name>Zn(2+)</name>
        <dbReference type="ChEBI" id="CHEBI:29105"/>
    </ligand>
</feature>
<protein>
    <recommendedName>
        <fullName evidence="1">Phosphoheptose isomerase</fullName>
        <ecNumber evidence="1">5.3.1.28</ecNumber>
    </recommendedName>
    <alternativeName>
        <fullName evidence="1">Sedoheptulose 7-phosphate isomerase</fullName>
    </alternativeName>
</protein>
<reference key="1">
    <citation type="journal article" date="2010" name="BMC Genomics">
        <title>A genomic perspective on the potential of Actinobacillus succinogenes for industrial succinate production.</title>
        <authorList>
            <person name="McKinlay J.B."/>
            <person name="Laivenieks M."/>
            <person name="Schindler B.D."/>
            <person name="McKinlay A.A."/>
            <person name="Siddaramappa S."/>
            <person name="Challacombe J.F."/>
            <person name="Lowry S.R."/>
            <person name="Clum A."/>
            <person name="Lapidus A.L."/>
            <person name="Burkhart K.B."/>
            <person name="Harkins V."/>
            <person name="Vieille C."/>
        </authorList>
    </citation>
    <scope>NUCLEOTIDE SEQUENCE [LARGE SCALE GENOMIC DNA]</scope>
    <source>
        <strain>ATCC 55618 / DSM 22257 / CCUG 43843 / 130Z</strain>
    </source>
</reference>
<dbReference type="EC" id="5.3.1.28" evidence="1"/>
<dbReference type="EMBL" id="CP000746">
    <property type="protein sequence ID" value="ABR73907.1"/>
    <property type="molecule type" value="Genomic_DNA"/>
</dbReference>
<dbReference type="RefSeq" id="WP_012072287.1">
    <property type="nucleotide sequence ID" value="NC_009655.1"/>
</dbReference>
<dbReference type="SMR" id="A6VLR0"/>
<dbReference type="STRING" id="339671.Asuc_0532"/>
<dbReference type="KEGG" id="asu:Asuc_0532"/>
<dbReference type="eggNOG" id="COG0279">
    <property type="taxonomic scope" value="Bacteria"/>
</dbReference>
<dbReference type="HOGENOM" id="CLU_080999_4_0_6"/>
<dbReference type="OrthoDB" id="9810929at2"/>
<dbReference type="UniPathway" id="UPA00041">
    <property type="reaction ID" value="UER00436"/>
</dbReference>
<dbReference type="Proteomes" id="UP000001114">
    <property type="component" value="Chromosome"/>
</dbReference>
<dbReference type="GO" id="GO:0005737">
    <property type="term" value="C:cytoplasm"/>
    <property type="evidence" value="ECO:0007669"/>
    <property type="project" value="UniProtKB-SubCell"/>
</dbReference>
<dbReference type="GO" id="GO:0097367">
    <property type="term" value="F:carbohydrate derivative binding"/>
    <property type="evidence" value="ECO:0007669"/>
    <property type="project" value="InterPro"/>
</dbReference>
<dbReference type="GO" id="GO:0008968">
    <property type="term" value="F:D-sedoheptulose 7-phosphate isomerase activity"/>
    <property type="evidence" value="ECO:0007669"/>
    <property type="project" value="UniProtKB-UniRule"/>
</dbReference>
<dbReference type="GO" id="GO:0008270">
    <property type="term" value="F:zinc ion binding"/>
    <property type="evidence" value="ECO:0007669"/>
    <property type="project" value="UniProtKB-UniRule"/>
</dbReference>
<dbReference type="GO" id="GO:0005975">
    <property type="term" value="P:carbohydrate metabolic process"/>
    <property type="evidence" value="ECO:0007669"/>
    <property type="project" value="UniProtKB-UniRule"/>
</dbReference>
<dbReference type="GO" id="GO:2001061">
    <property type="term" value="P:D-glycero-D-manno-heptose 7-phosphate biosynthetic process"/>
    <property type="evidence" value="ECO:0007669"/>
    <property type="project" value="UniProtKB-UniPathway"/>
</dbReference>
<dbReference type="CDD" id="cd05006">
    <property type="entry name" value="SIS_GmhA"/>
    <property type="match status" value="1"/>
</dbReference>
<dbReference type="Gene3D" id="3.40.50.10490">
    <property type="entry name" value="Glucose-6-phosphate isomerase like protein, domain 1"/>
    <property type="match status" value="1"/>
</dbReference>
<dbReference type="HAMAP" id="MF_00067">
    <property type="entry name" value="GmhA"/>
    <property type="match status" value="1"/>
</dbReference>
<dbReference type="InterPro" id="IPR035461">
    <property type="entry name" value="GmhA/DiaA"/>
</dbReference>
<dbReference type="InterPro" id="IPR004515">
    <property type="entry name" value="Phosphoheptose_Isoase"/>
</dbReference>
<dbReference type="InterPro" id="IPR001347">
    <property type="entry name" value="SIS_dom"/>
</dbReference>
<dbReference type="InterPro" id="IPR046348">
    <property type="entry name" value="SIS_dom_sf"/>
</dbReference>
<dbReference type="InterPro" id="IPR050099">
    <property type="entry name" value="SIS_GmhA/DiaA_subfam"/>
</dbReference>
<dbReference type="NCBIfam" id="TIGR00441">
    <property type="entry name" value="gmhA"/>
    <property type="match status" value="1"/>
</dbReference>
<dbReference type="NCBIfam" id="NF001628">
    <property type="entry name" value="PRK00414.1"/>
    <property type="match status" value="1"/>
</dbReference>
<dbReference type="PANTHER" id="PTHR30390:SF7">
    <property type="entry name" value="PHOSPHOHEPTOSE ISOMERASE"/>
    <property type="match status" value="1"/>
</dbReference>
<dbReference type="PANTHER" id="PTHR30390">
    <property type="entry name" value="SEDOHEPTULOSE 7-PHOSPHATE ISOMERASE / DNAA INITIATOR-ASSOCIATING FACTOR FOR REPLICATION INITIATION"/>
    <property type="match status" value="1"/>
</dbReference>
<dbReference type="Pfam" id="PF13580">
    <property type="entry name" value="SIS_2"/>
    <property type="match status" value="1"/>
</dbReference>
<dbReference type="SUPFAM" id="SSF53697">
    <property type="entry name" value="SIS domain"/>
    <property type="match status" value="1"/>
</dbReference>
<dbReference type="PROSITE" id="PS51464">
    <property type="entry name" value="SIS"/>
    <property type="match status" value="1"/>
</dbReference>
<comment type="function">
    <text evidence="1">Catalyzes the isomerization of sedoheptulose 7-phosphate in D-glycero-D-manno-heptose 7-phosphate.</text>
</comment>
<comment type="catalytic activity">
    <reaction evidence="1">
        <text>2 D-sedoheptulose 7-phosphate = D-glycero-alpha-D-manno-heptose 7-phosphate + D-glycero-beta-D-manno-heptose 7-phosphate</text>
        <dbReference type="Rhea" id="RHEA:27489"/>
        <dbReference type="ChEBI" id="CHEBI:57483"/>
        <dbReference type="ChEBI" id="CHEBI:60203"/>
        <dbReference type="ChEBI" id="CHEBI:60204"/>
        <dbReference type="EC" id="5.3.1.28"/>
    </reaction>
</comment>
<comment type="cofactor">
    <cofactor evidence="1">
        <name>Zn(2+)</name>
        <dbReference type="ChEBI" id="CHEBI:29105"/>
    </cofactor>
    <text evidence="1">Binds 1 zinc ion per subunit.</text>
</comment>
<comment type="pathway">
    <text evidence="1">Carbohydrate biosynthesis; D-glycero-D-manno-heptose 7-phosphate biosynthesis; D-glycero-alpha-D-manno-heptose 7-phosphate and D-glycero-beta-D-manno-heptose 7-phosphate from sedoheptulose 7-phosphate: step 1/1.</text>
</comment>
<comment type="subunit">
    <text evidence="1">Homotetramer.</text>
</comment>
<comment type="subcellular location">
    <subcellularLocation>
        <location evidence="1">Cytoplasm</location>
    </subcellularLocation>
</comment>
<comment type="miscellaneous">
    <text evidence="1">The reaction produces a racemic mixture of D-glycero-alpha-D-manno-heptose 7-phosphate and D-glycero-beta-D-manno-heptose 7-phosphate.</text>
</comment>
<comment type="similarity">
    <text evidence="1">Belongs to the SIS family. GmhA subfamily.</text>
</comment>
<evidence type="ECO:0000255" key="1">
    <source>
        <dbReference type="HAMAP-Rule" id="MF_00067"/>
    </source>
</evidence>
<proteinExistence type="inferred from homology"/>
<sequence>MYLDQIKTELLEAQDVLQKFIADENNIKLIQQAALLISDSFKQGGKVLSCGNGGSHCDAMHFAEELTGRYRENRPGYPAIAISDVSHLSCVSNDFGYDYVFSRYVEAVGKPGDVLFGLSTSGNSKNVLNAIQAAKQKDMKVIAMTGKDGGEMAGLADVEIRVPHFRYADRIQEIHIKVIHILMMLIEFEMAKDV</sequence>